<protein>
    <recommendedName>
        <fullName evidence="1">DNA-directed RNA polymerase subunit beta</fullName>
        <shortName evidence="1">RNAP subunit beta</shortName>
        <ecNumber evidence="1">2.7.7.6</ecNumber>
    </recommendedName>
    <alternativeName>
        <fullName evidence="1">RNA polymerase subunit beta</fullName>
    </alternativeName>
    <alternativeName>
        <fullName evidence="1">Transcriptase subunit beta</fullName>
    </alternativeName>
</protein>
<evidence type="ECO:0000255" key="1">
    <source>
        <dbReference type="HAMAP-Rule" id="MF_01321"/>
    </source>
</evidence>
<comment type="function">
    <text evidence="1">DNA-dependent RNA polymerase catalyzes the transcription of DNA into RNA using the four ribonucleoside triphosphates as substrates.</text>
</comment>
<comment type="catalytic activity">
    <reaction evidence="1">
        <text>RNA(n) + a ribonucleoside 5'-triphosphate = RNA(n+1) + diphosphate</text>
        <dbReference type="Rhea" id="RHEA:21248"/>
        <dbReference type="Rhea" id="RHEA-COMP:14527"/>
        <dbReference type="Rhea" id="RHEA-COMP:17342"/>
        <dbReference type="ChEBI" id="CHEBI:33019"/>
        <dbReference type="ChEBI" id="CHEBI:61557"/>
        <dbReference type="ChEBI" id="CHEBI:140395"/>
        <dbReference type="EC" id="2.7.7.6"/>
    </reaction>
</comment>
<comment type="subunit">
    <text evidence="1">The RNAP catalytic core consists of 2 alpha, 1 beta, 1 beta' and 1 omega subunit. When a sigma factor is associated with the core the holoenzyme is formed, which can initiate transcription.</text>
</comment>
<comment type="similarity">
    <text evidence="1">Belongs to the RNA polymerase beta chain family.</text>
</comment>
<sequence length="1361" mass="152468">MTTYSFTEKKRIRKNFSKRPTVLETPYLLSMQIDSYNDFLQQHVPMQSRAKKGLQEAFESIFPIKSHNEMVELQFVGYEFGKPEFDVRECQLRGVTYAAPLRVRMRLAIYDKNSTKKKLKQVVESESVYMGDIPLMTDDGTFVINGTERVIVSQLHRSPGVFFGDDDGQGHSSGKKLYNARIIPYRGSWLDLEFDVKDLIYCRIDRRRKLLITILLRALGLSNQEMLDIFFSKQTFKLNKTGKIELVFEPEQFAGELAQFDIIADGEVIVPMGRKISSRFVRQLIEKKVKKQTVPVDFVVGKFLATDLVDKETGELILAANSELTEELLTRFVELGVKEFQTLLINENGHGGYLADTLRLDETTTELEARAEIYRMMRPGEPPTKEAADSLFEGLFFDEARYDLSRVGRMKFNRSLGREESEGSGILSKEDIIGVVKKLIAIKDGFGSTDDIDHLGNRRIRSVGEMAENAFRIGLVRLERTVKERLAQAESEGLTPKDLINVKPVGAAVKEFFSSSQLSQFMDQNNPLSEVTHKRRISALGPGGLTRERAGFEVRDVHPTHYGRLCPIETPEGPNIGLINSLAVYARTNEYGFLETPYRKVIDGKVTDEIEYLSAIDESKYVIAQANAHLDEHGAFMDGLISTRFENEFTLMPSSRVQYMDVSPRQIVSVAASLIPFLEHDDANRALMGSNMQRQAVPTLRADKPLVGTGMERVVAMDSGVLVKAARGGVIDSVDSSRIVVKVNDDEVQAGGLGVDIYNLTKYTRSNQNTCINQKPLVSPGDIVARGDVLADGPSTDMGELALGQNVLVAFMPWNGYNYEDSILISERVSQEDRFTTIHIEELTCIARDTKLGPEEISSDIPNVKESALAKLDTTGIVYVGAEVKFGDILVGKVTPKGERSQSPEEKLLRAIFGEKASDVKDSSLRVPTGMDGTVVDVRVYTRDGIEKDERAKAIEKMEIDSIAKDIKDQLRIFSADIHDRAARLLLGQAIKKAPKRKSGDTVDQALLDETTPEQWFDFRMQDEAINEKLDAMKQLLEDKHKELQDYYEEKKAKFSQGDDLAPGVLKMVKVYLAVKRRLQPGDKMAGRHGNKGVVSLVVPVEDMPYMEDGTPVDIVLNPLGVPSRMNIGQVLELHLGWAAAGLGKRLAQMMDEGAPIKELRRYLDAVYNHNPACKKEDLDALSDEDFWQLCRNLRQGIPMATPVFDGAEEVEDLQKMLELAELPATGQTHLYDGRTGERFDREVSVGYMYMLKLHHLVDDKMHARSTGPYSLVTQQPLGGRAQFGGQRFGEMEVWALQAYGASYTLQEMLTVKSDDVDGRTKMYKNIVDGNLKIEPGLPESFNVLTKEIRALGIDIGLTQD</sequence>
<accession>A5EX70</accession>
<reference key="1">
    <citation type="journal article" date="2007" name="Nat. Biotechnol.">
        <title>Genome sequence and identification of candidate vaccine antigens from the animal pathogen Dichelobacter nodosus.</title>
        <authorList>
            <person name="Myers G.S.A."/>
            <person name="Parker D."/>
            <person name="Al-Hasani K."/>
            <person name="Kennan R.M."/>
            <person name="Seemann T."/>
            <person name="Ren Q."/>
            <person name="Badger J.H."/>
            <person name="Selengut J.D."/>
            <person name="Deboy R.T."/>
            <person name="Tettelin H."/>
            <person name="Boyce J.D."/>
            <person name="McCarl V.P."/>
            <person name="Han X."/>
            <person name="Nelson W.C."/>
            <person name="Madupu R."/>
            <person name="Mohamoud Y."/>
            <person name="Holley T."/>
            <person name="Fedorova N."/>
            <person name="Khouri H."/>
            <person name="Bottomley S.P."/>
            <person name="Whittington R.J."/>
            <person name="Adler B."/>
            <person name="Songer J.G."/>
            <person name="Rood J.I."/>
            <person name="Paulsen I.T."/>
        </authorList>
    </citation>
    <scope>NUCLEOTIDE SEQUENCE [LARGE SCALE GENOMIC DNA]</scope>
    <source>
        <strain>VCS1703A</strain>
    </source>
</reference>
<proteinExistence type="inferred from homology"/>
<name>RPOB_DICNV</name>
<feature type="chain" id="PRO_0000300309" description="DNA-directed RNA polymerase subunit beta">
    <location>
        <begin position="1"/>
        <end position="1361"/>
    </location>
</feature>
<dbReference type="EC" id="2.7.7.6" evidence="1"/>
<dbReference type="EMBL" id="CP000513">
    <property type="protein sequence ID" value="ABQ14048.1"/>
    <property type="molecule type" value="Genomic_DNA"/>
</dbReference>
<dbReference type="RefSeq" id="WP_012031577.1">
    <property type="nucleotide sequence ID" value="NC_009446.1"/>
</dbReference>
<dbReference type="SMR" id="A5EX70"/>
<dbReference type="STRING" id="246195.DNO_1282"/>
<dbReference type="KEGG" id="dno:DNO_1282"/>
<dbReference type="eggNOG" id="COG0085">
    <property type="taxonomic scope" value="Bacteria"/>
</dbReference>
<dbReference type="HOGENOM" id="CLU_000524_4_1_6"/>
<dbReference type="OrthoDB" id="9803954at2"/>
<dbReference type="Proteomes" id="UP000000248">
    <property type="component" value="Chromosome"/>
</dbReference>
<dbReference type="GO" id="GO:0000428">
    <property type="term" value="C:DNA-directed RNA polymerase complex"/>
    <property type="evidence" value="ECO:0007669"/>
    <property type="project" value="UniProtKB-KW"/>
</dbReference>
<dbReference type="GO" id="GO:0003677">
    <property type="term" value="F:DNA binding"/>
    <property type="evidence" value="ECO:0007669"/>
    <property type="project" value="UniProtKB-UniRule"/>
</dbReference>
<dbReference type="GO" id="GO:0003899">
    <property type="term" value="F:DNA-directed RNA polymerase activity"/>
    <property type="evidence" value="ECO:0007669"/>
    <property type="project" value="UniProtKB-UniRule"/>
</dbReference>
<dbReference type="GO" id="GO:0032549">
    <property type="term" value="F:ribonucleoside binding"/>
    <property type="evidence" value="ECO:0007669"/>
    <property type="project" value="InterPro"/>
</dbReference>
<dbReference type="GO" id="GO:0006351">
    <property type="term" value="P:DNA-templated transcription"/>
    <property type="evidence" value="ECO:0007669"/>
    <property type="project" value="UniProtKB-UniRule"/>
</dbReference>
<dbReference type="CDD" id="cd00653">
    <property type="entry name" value="RNA_pol_B_RPB2"/>
    <property type="match status" value="1"/>
</dbReference>
<dbReference type="FunFam" id="2.40.50.100:FF:000006">
    <property type="entry name" value="DNA-directed RNA polymerase subunit beta"/>
    <property type="match status" value="1"/>
</dbReference>
<dbReference type="FunFam" id="3.90.1800.10:FF:000001">
    <property type="entry name" value="DNA-directed RNA polymerase subunit beta"/>
    <property type="match status" value="1"/>
</dbReference>
<dbReference type="Gene3D" id="2.40.50.100">
    <property type="match status" value="1"/>
</dbReference>
<dbReference type="Gene3D" id="2.40.50.150">
    <property type="match status" value="1"/>
</dbReference>
<dbReference type="Gene3D" id="3.90.1100.10">
    <property type="match status" value="3"/>
</dbReference>
<dbReference type="Gene3D" id="2.40.270.10">
    <property type="entry name" value="DNA-directed RNA polymerase, subunit 2, domain 6"/>
    <property type="match status" value="1"/>
</dbReference>
<dbReference type="Gene3D" id="3.90.1800.10">
    <property type="entry name" value="RNA polymerase alpha subunit dimerisation domain"/>
    <property type="match status" value="1"/>
</dbReference>
<dbReference type="Gene3D" id="3.90.1110.10">
    <property type="entry name" value="RNA polymerase Rpb2, domain 2"/>
    <property type="match status" value="1"/>
</dbReference>
<dbReference type="HAMAP" id="MF_01321">
    <property type="entry name" value="RNApol_bact_RpoB"/>
    <property type="match status" value="1"/>
</dbReference>
<dbReference type="InterPro" id="IPR019462">
    <property type="entry name" value="DNA-dir_RNA_pol_bsu_external_1"/>
</dbReference>
<dbReference type="InterPro" id="IPR015712">
    <property type="entry name" value="DNA-dir_RNA_pol_su2"/>
</dbReference>
<dbReference type="InterPro" id="IPR007120">
    <property type="entry name" value="DNA-dir_RNAP_su2_dom"/>
</dbReference>
<dbReference type="InterPro" id="IPR037033">
    <property type="entry name" value="DNA-dir_RNAP_su2_hyb_sf"/>
</dbReference>
<dbReference type="InterPro" id="IPR010243">
    <property type="entry name" value="RNA_pol_bsu_bac"/>
</dbReference>
<dbReference type="InterPro" id="IPR007121">
    <property type="entry name" value="RNA_pol_bsu_CS"/>
</dbReference>
<dbReference type="InterPro" id="IPR007644">
    <property type="entry name" value="RNA_pol_bsu_protrusion"/>
</dbReference>
<dbReference type="InterPro" id="IPR007642">
    <property type="entry name" value="RNA_pol_Rpb2_2"/>
</dbReference>
<dbReference type="InterPro" id="IPR037034">
    <property type="entry name" value="RNA_pol_Rpb2_2_sf"/>
</dbReference>
<dbReference type="InterPro" id="IPR007645">
    <property type="entry name" value="RNA_pol_Rpb2_3"/>
</dbReference>
<dbReference type="InterPro" id="IPR007641">
    <property type="entry name" value="RNA_pol_Rpb2_7"/>
</dbReference>
<dbReference type="InterPro" id="IPR014724">
    <property type="entry name" value="RNA_pol_RPB2_OB-fold"/>
</dbReference>
<dbReference type="NCBIfam" id="NF001616">
    <property type="entry name" value="PRK00405.1"/>
    <property type="match status" value="1"/>
</dbReference>
<dbReference type="NCBIfam" id="TIGR02013">
    <property type="entry name" value="rpoB"/>
    <property type="match status" value="1"/>
</dbReference>
<dbReference type="PANTHER" id="PTHR20856">
    <property type="entry name" value="DNA-DIRECTED RNA POLYMERASE I SUBUNIT 2"/>
    <property type="match status" value="1"/>
</dbReference>
<dbReference type="Pfam" id="PF04563">
    <property type="entry name" value="RNA_pol_Rpb2_1"/>
    <property type="match status" value="1"/>
</dbReference>
<dbReference type="Pfam" id="PF04561">
    <property type="entry name" value="RNA_pol_Rpb2_2"/>
    <property type="match status" value="2"/>
</dbReference>
<dbReference type="Pfam" id="PF04565">
    <property type="entry name" value="RNA_pol_Rpb2_3"/>
    <property type="match status" value="1"/>
</dbReference>
<dbReference type="Pfam" id="PF10385">
    <property type="entry name" value="RNA_pol_Rpb2_45"/>
    <property type="match status" value="1"/>
</dbReference>
<dbReference type="Pfam" id="PF00562">
    <property type="entry name" value="RNA_pol_Rpb2_6"/>
    <property type="match status" value="1"/>
</dbReference>
<dbReference type="Pfam" id="PF04560">
    <property type="entry name" value="RNA_pol_Rpb2_7"/>
    <property type="match status" value="1"/>
</dbReference>
<dbReference type="SUPFAM" id="SSF64484">
    <property type="entry name" value="beta and beta-prime subunits of DNA dependent RNA-polymerase"/>
    <property type="match status" value="1"/>
</dbReference>
<dbReference type="PROSITE" id="PS01166">
    <property type="entry name" value="RNA_POL_BETA"/>
    <property type="match status" value="1"/>
</dbReference>
<gene>
    <name evidence="1" type="primary">rpoB</name>
    <name type="ordered locus">DNO_1282</name>
</gene>
<keyword id="KW-0240">DNA-directed RNA polymerase</keyword>
<keyword id="KW-0548">Nucleotidyltransferase</keyword>
<keyword id="KW-1185">Reference proteome</keyword>
<keyword id="KW-0804">Transcription</keyword>
<keyword id="KW-0808">Transferase</keyword>
<organism>
    <name type="scientific">Dichelobacter nodosus (strain VCS1703A)</name>
    <dbReference type="NCBI Taxonomy" id="246195"/>
    <lineage>
        <taxon>Bacteria</taxon>
        <taxon>Pseudomonadati</taxon>
        <taxon>Pseudomonadota</taxon>
        <taxon>Gammaproteobacteria</taxon>
        <taxon>Cardiobacteriales</taxon>
        <taxon>Cardiobacteriaceae</taxon>
        <taxon>Dichelobacter</taxon>
    </lineage>
</organism>